<evidence type="ECO:0000255" key="1">
    <source>
        <dbReference type="HAMAP-Rule" id="MF_01320"/>
    </source>
</evidence>
<evidence type="ECO:0000256" key="2">
    <source>
        <dbReference type="SAM" id="MobiDB-lite"/>
    </source>
</evidence>
<evidence type="ECO:0000305" key="3"/>
<accession>B3PMP4</accession>
<name>RL2_META1</name>
<reference key="1">
    <citation type="journal article" date="2008" name="Infect. Immun.">
        <title>Genome of Mycoplasma arthritidis.</title>
        <authorList>
            <person name="Dybvig K."/>
            <person name="Zuhua C."/>
            <person name="Lao P."/>
            <person name="Jordan D.S."/>
            <person name="French C.T."/>
            <person name="Tu A.H."/>
            <person name="Loraine A.E."/>
        </authorList>
    </citation>
    <scope>NUCLEOTIDE SEQUENCE [LARGE SCALE GENOMIC DNA]</scope>
    <source>
        <strain>158L3-1</strain>
    </source>
</reference>
<organism>
    <name type="scientific">Metamycoplasma arthritidis (strain 158L3-1)</name>
    <name type="common">Mycoplasma arthritidis</name>
    <dbReference type="NCBI Taxonomy" id="243272"/>
    <lineage>
        <taxon>Bacteria</taxon>
        <taxon>Bacillati</taxon>
        <taxon>Mycoplasmatota</taxon>
        <taxon>Mycoplasmoidales</taxon>
        <taxon>Metamycoplasmataceae</taxon>
        <taxon>Metamycoplasma</taxon>
    </lineage>
</organism>
<gene>
    <name evidence="1" type="primary">rplB</name>
    <name type="ordered locus">MARTH_orf440</name>
</gene>
<keyword id="KW-1185">Reference proteome</keyword>
<keyword id="KW-0687">Ribonucleoprotein</keyword>
<keyword id="KW-0689">Ribosomal protein</keyword>
<keyword id="KW-0694">RNA-binding</keyword>
<keyword id="KW-0699">rRNA-binding</keyword>
<comment type="function">
    <text evidence="1">One of the primary rRNA binding proteins. Required for association of the 30S and 50S subunits to form the 70S ribosome, for tRNA binding and peptide bond formation. It has been suggested to have peptidyltransferase activity; this is somewhat controversial. Makes several contacts with the 16S rRNA in the 70S ribosome.</text>
</comment>
<comment type="subunit">
    <text evidence="1">Part of the 50S ribosomal subunit. Forms a bridge to the 30S subunit in the 70S ribosome.</text>
</comment>
<comment type="similarity">
    <text evidence="1">Belongs to the universal ribosomal protein uL2 family.</text>
</comment>
<sequence length="281" mass="31167">MAIKKFKAYTNGRRNMSSLDYQANLSGHRPEKSLLVALPTHSGRNNQGKITTRHHGGRLKRFYRLVDFKRNKDDILATVKTIEYDPNRSANISLVVYADGEKRYIISPKGLKVGQKIISGEQVDIQIGNSLPLKNIPEGTYVHNIEMQPKQGGVIARSAGSSAQILGKDETGRYIILRLKSGEVRKILALCRATVGEVGNEEHSLVNIGKAGRNRLRGIRPTVRGSAMNPNDHPHGGGEGHQPIGRKSPMTPWGKKALGVKTRKTKKASNQFIIRRRKESK</sequence>
<feature type="chain" id="PRO_1000141582" description="Large ribosomal subunit protein uL2">
    <location>
        <begin position="1"/>
        <end position="281"/>
    </location>
</feature>
<feature type="region of interest" description="Disordered" evidence="2">
    <location>
        <begin position="224"/>
        <end position="281"/>
    </location>
</feature>
<protein>
    <recommendedName>
        <fullName evidence="1">Large ribosomal subunit protein uL2</fullName>
    </recommendedName>
    <alternativeName>
        <fullName evidence="3">50S ribosomal protein L2</fullName>
    </alternativeName>
</protein>
<proteinExistence type="inferred from homology"/>
<dbReference type="EMBL" id="CP001047">
    <property type="protein sequence ID" value="ACF07296.1"/>
    <property type="molecule type" value="Genomic_DNA"/>
</dbReference>
<dbReference type="RefSeq" id="WP_012498253.1">
    <property type="nucleotide sequence ID" value="NC_011025.1"/>
</dbReference>
<dbReference type="SMR" id="B3PMP4"/>
<dbReference type="STRING" id="243272.MARTH_orf440"/>
<dbReference type="KEGG" id="mat:MARTH_orf440"/>
<dbReference type="eggNOG" id="COG0090">
    <property type="taxonomic scope" value="Bacteria"/>
</dbReference>
<dbReference type="HOGENOM" id="CLU_036235_2_1_14"/>
<dbReference type="Proteomes" id="UP000008812">
    <property type="component" value="Chromosome"/>
</dbReference>
<dbReference type="GO" id="GO:0015934">
    <property type="term" value="C:large ribosomal subunit"/>
    <property type="evidence" value="ECO:0007669"/>
    <property type="project" value="InterPro"/>
</dbReference>
<dbReference type="GO" id="GO:0019843">
    <property type="term" value="F:rRNA binding"/>
    <property type="evidence" value="ECO:0007669"/>
    <property type="project" value="UniProtKB-UniRule"/>
</dbReference>
<dbReference type="GO" id="GO:0003735">
    <property type="term" value="F:structural constituent of ribosome"/>
    <property type="evidence" value="ECO:0007669"/>
    <property type="project" value="InterPro"/>
</dbReference>
<dbReference type="GO" id="GO:0016740">
    <property type="term" value="F:transferase activity"/>
    <property type="evidence" value="ECO:0007669"/>
    <property type="project" value="InterPro"/>
</dbReference>
<dbReference type="GO" id="GO:0002181">
    <property type="term" value="P:cytoplasmic translation"/>
    <property type="evidence" value="ECO:0007669"/>
    <property type="project" value="TreeGrafter"/>
</dbReference>
<dbReference type="FunFam" id="2.30.30.30:FF:000001">
    <property type="entry name" value="50S ribosomal protein L2"/>
    <property type="match status" value="1"/>
</dbReference>
<dbReference type="FunFam" id="2.40.50.140:FF:000003">
    <property type="entry name" value="50S ribosomal protein L2"/>
    <property type="match status" value="1"/>
</dbReference>
<dbReference type="FunFam" id="4.10.950.10:FF:000001">
    <property type="entry name" value="50S ribosomal protein L2"/>
    <property type="match status" value="1"/>
</dbReference>
<dbReference type="Gene3D" id="2.30.30.30">
    <property type="match status" value="1"/>
</dbReference>
<dbReference type="Gene3D" id="2.40.50.140">
    <property type="entry name" value="Nucleic acid-binding proteins"/>
    <property type="match status" value="1"/>
</dbReference>
<dbReference type="Gene3D" id="4.10.950.10">
    <property type="entry name" value="Ribosomal protein L2, domain 3"/>
    <property type="match status" value="1"/>
</dbReference>
<dbReference type="HAMAP" id="MF_01320_B">
    <property type="entry name" value="Ribosomal_uL2_B"/>
    <property type="match status" value="1"/>
</dbReference>
<dbReference type="InterPro" id="IPR012340">
    <property type="entry name" value="NA-bd_OB-fold"/>
</dbReference>
<dbReference type="InterPro" id="IPR014722">
    <property type="entry name" value="Rib_uL2_dom2"/>
</dbReference>
<dbReference type="InterPro" id="IPR002171">
    <property type="entry name" value="Ribosomal_uL2"/>
</dbReference>
<dbReference type="InterPro" id="IPR005880">
    <property type="entry name" value="Ribosomal_uL2_bac/org-type"/>
</dbReference>
<dbReference type="InterPro" id="IPR022669">
    <property type="entry name" value="Ribosomal_uL2_C"/>
</dbReference>
<dbReference type="InterPro" id="IPR022671">
    <property type="entry name" value="Ribosomal_uL2_CS"/>
</dbReference>
<dbReference type="InterPro" id="IPR014726">
    <property type="entry name" value="Ribosomal_uL2_dom3"/>
</dbReference>
<dbReference type="InterPro" id="IPR022666">
    <property type="entry name" value="Ribosomal_uL2_RNA-bd_dom"/>
</dbReference>
<dbReference type="InterPro" id="IPR008991">
    <property type="entry name" value="Translation_prot_SH3-like_sf"/>
</dbReference>
<dbReference type="NCBIfam" id="TIGR01171">
    <property type="entry name" value="rplB_bact"/>
    <property type="match status" value="1"/>
</dbReference>
<dbReference type="PANTHER" id="PTHR13691:SF5">
    <property type="entry name" value="LARGE RIBOSOMAL SUBUNIT PROTEIN UL2M"/>
    <property type="match status" value="1"/>
</dbReference>
<dbReference type="PANTHER" id="PTHR13691">
    <property type="entry name" value="RIBOSOMAL PROTEIN L2"/>
    <property type="match status" value="1"/>
</dbReference>
<dbReference type="Pfam" id="PF00181">
    <property type="entry name" value="Ribosomal_L2"/>
    <property type="match status" value="1"/>
</dbReference>
<dbReference type="Pfam" id="PF03947">
    <property type="entry name" value="Ribosomal_L2_C"/>
    <property type="match status" value="1"/>
</dbReference>
<dbReference type="PIRSF" id="PIRSF002158">
    <property type="entry name" value="Ribosomal_L2"/>
    <property type="match status" value="1"/>
</dbReference>
<dbReference type="SMART" id="SM01383">
    <property type="entry name" value="Ribosomal_L2"/>
    <property type="match status" value="1"/>
</dbReference>
<dbReference type="SMART" id="SM01382">
    <property type="entry name" value="Ribosomal_L2_C"/>
    <property type="match status" value="1"/>
</dbReference>
<dbReference type="SUPFAM" id="SSF50249">
    <property type="entry name" value="Nucleic acid-binding proteins"/>
    <property type="match status" value="1"/>
</dbReference>
<dbReference type="SUPFAM" id="SSF50104">
    <property type="entry name" value="Translation proteins SH3-like domain"/>
    <property type="match status" value="1"/>
</dbReference>
<dbReference type="PROSITE" id="PS00467">
    <property type="entry name" value="RIBOSOMAL_L2"/>
    <property type="match status" value="1"/>
</dbReference>